<comment type="function">
    <text evidence="1">Phosphorylation of dTMP to form dTDP in both de novo and salvage pathways of dTTP synthesis.</text>
</comment>
<comment type="catalytic activity">
    <reaction evidence="1">
        <text>dTMP + ATP = dTDP + ADP</text>
        <dbReference type="Rhea" id="RHEA:13517"/>
        <dbReference type="ChEBI" id="CHEBI:30616"/>
        <dbReference type="ChEBI" id="CHEBI:58369"/>
        <dbReference type="ChEBI" id="CHEBI:63528"/>
        <dbReference type="ChEBI" id="CHEBI:456216"/>
        <dbReference type="EC" id="2.7.4.9"/>
    </reaction>
</comment>
<comment type="similarity">
    <text evidence="1">Belongs to the thymidylate kinase family.</text>
</comment>
<reference key="1">
    <citation type="journal article" date="2009" name="PLoS Genet.">
        <title>Organised genome dynamics in the Escherichia coli species results in highly diverse adaptive paths.</title>
        <authorList>
            <person name="Touchon M."/>
            <person name="Hoede C."/>
            <person name="Tenaillon O."/>
            <person name="Barbe V."/>
            <person name="Baeriswyl S."/>
            <person name="Bidet P."/>
            <person name="Bingen E."/>
            <person name="Bonacorsi S."/>
            <person name="Bouchier C."/>
            <person name="Bouvet O."/>
            <person name="Calteau A."/>
            <person name="Chiapello H."/>
            <person name="Clermont O."/>
            <person name="Cruveiller S."/>
            <person name="Danchin A."/>
            <person name="Diard M."/>
            <person name="Dossat C."/>
            <person name="Karoui M.E."/>
            <person name="Frapy E."/>
            <person name="Garry L."/>
            <person name="Ghigo J.M."/>
            <person name="Gilles A.M."/>
            <person name="Johnson J."/>
            <person name="Le Bouguenec C."/>
            <person name="Lescat M."/>
            <person name="Mangenot S."/>
            <person name="Martinez-Jehanne V."/>
            <person name="Matic I."/>
            <person name="Nassif X."/>
            <person name="Oztas S."/>
            <person name="Petit M.A."/>
            <person name="Pichon C."/>
            <person name="Rouy Z."/>
            <person name="Ruf C.S."/>
            <person name="Schneider D."/>
            <person name="Tourret J."/>
            <person name="Vacherie B."/>
            <person name="Vallenet D."/>
            <person name="Medigue C."/>
            <person name="Rocha E.P.C."/>
            <person name="Denamur E."/>
        </authorList>
    </citation>
    <scope>NUCLEOTIDE SEQUENCE [LARGE SCALE GENOMIC DNA]</scope>
    <source>
        <strain>ATCC 35469 / DSM 13698 / BCRC 15582 / CCUG 18766 / IAM 14443 / JCM 21226 / LMG 7866 / NBRC 102419 / NCTC 12128 / CDC 0568-73</strain>
    </source>
</reference>
<gene>
    <name evidence="1" type="primary">tmk</name>
    <name type="ordered locus">EFER_1829</name>
</gene>
<accession>B7LT40</accession>
<name>KTHY_ESCF3</name>
<protein>
    <recommendedName>
        <fullName evidence="1">Thymidylate kinase</fullName>
        <ecNumber evidence="1">2.7.4.9</ecNumber>
    </recommendedName>
    <alternativeName>
        <fullName evidence="1">dTMP kinase</fullName>
    </alternativeName>
</protein>
<feature type="chain" id="PRO_1000190766" description="Thymidylate kinase">
    <location>
        <begin position="1"/>
        <end position="213"/>
    </location>
</feature>
<feature type="binding site" evidence="1">
    <location>
        <begin position="10"/>
        <end position="17"/>
    </location>
    <ligand>
        <name>ATP</name>
        <dbReference type="ChEBI" id="CHEBI:30616"/>
    </ligand>
</feature>
<proteinExistence type="inferred from homology"/>
<organism>
    <name type="scientific">Escherichia fergusonii (strain ATCC 35469 / DSM 13698 / CCUG 18766 / IAM 14443 / JCM 21226 / LMG 7866 / NBRC 102419 / NCTC 12128 / CDC 0568-73)</name>
    <dbReference type="NCBI Taxonomy" id="585054"/>
    <lineage>
        <taxon>Bacteria</taxon>
        <taxon>Pseudomonadati</taxon>
        <taxon>Pseudomonadota</taxon>
        <taxon>Gammaproteobacteria</taxon>
        <taxon>Enterobacterales</taxon>
        <taxon>Enterobacteriaceae</taxon>
        <taxon>Escherichia</taxon>
    </lineage>
</organism>
<keyword id="KW-0067">ATP-binding</keyword>
<keyword id="KW-0418">Kinase</keyword>
<keyword id="KW-0545">Nucleotide biosynthesis</keyword>
<keyword id="KW-0547">Nucleotide-binding</keyword>
<keyword id="KW-0808">Transferase</keyword>
<dbReference type="EC" id="2.7.4.9" evidence="1"/>
<dbReference type="EMBL" id="CU928158">
    <property type="protein sequence ID" value="CAQ89344.1"/>
    <property type="molecule type" value="Genomic_DNA"/>
</dbReference>
<dbReference type="RefSeq" id="WP_001257366.1">
    <property type="nucleotide sequence ID" value="NC_011740.1"/>
</dbReference>
<dbReference type="SMR" id="B7LT40"/>
<dbReference type="GeneID" id="75057133"/>
<dbReference type="KEGG" id="efe:EFER_1829"/>
<dbReference type="HOGENOM" id="CLU_049131_0_1_6"/>
<dbReference type="OrthoDB" id="9774907at2"/>
<dbReference type="Proteomes" id="UP000000745">
    <property type="component" value="Chromosome"/>
</dbReference>
<dbReference type="GO" id="GO:0005829">
    <property type="term" value="C:cytosol"/>
    <property type="evidence" value="ECO:0007669"/>
    <property type="project" value="TreeGrafter"/>
</dbReference>
<dbReference type="GO" id="GO:0005524">
    <property type="term" value="F:ATP binding"/>
    <property type="evidence" value="ECO:0007669"/>
    <property type="project" value="UniProtKB-UniRule"/>
</dbReference>
<dbReference type="GO" id="GO:0004798">
    <property type="term" value="F:dTMP kinase activity"/>
    <property type="evidence" value="ECO:0007669"/>
    <property type="project" value="UniProtKB-UniRule"/>
</dbReference>
<dbReference type="GO" id="GO:0006233">
    <property type="term" value="P:dTDP biosynthetic process"/>
    <property type="evidence" value="ECO:0007669"/>
    <property type="project" value="InterPro"/>
</dbReference>
<dbReference type="GO" id="GO:0006235">
    <property type="term" value="P:dTTP biosynthetic process"/>
    <property type="evidence" value="ECO:0007669"/>
    <property type="project" value="UniProtKB-UniRule"/>
</dbReference>
<dbReference type="GO" id="GO:0006227">
    <property type="term" value="P:dUDP biosynthetic process"/>
    <property type="evidence" value="ECO:0007669"/>
    <property type="project" value="TreeGrafter"/>
</dbReference>
<dbReference type="CDD" id="cd01672">
    <property type="entry name" value="TMPK"/>
    <property type="match status" value="1"/>
</dbReference>
<dbReference type="FunFam" id="3.40.50.300:FF:000321">
    <property type="entry name" value="Thymidylate kinase"/>
    <property type="match status" value="1"/>
</dbReference>
<dbReference type="Gene3D" id="3.40.50.300">
    <property type="entry name" value="P-loop containing nucleotide triphosphate hydrolases"/>
    <property type="match status" value="1"/>
</dbReference>
<dbReference type="HAMAP" id="MF_00165">
    <property type="entry name" value="Thymidylate_kinase"/>
    <property type="match status" value="1"/>
</dbReference>
<dbReference type="InterPro" id="IPR027417">
    <property type="entry name" value="P-loop_NTPase"/>
</dbReference>
<dbReference type="InterPro" id="IPR039430">
    <property type="entry name" value="Thymidylate_kin-like_dom"/>
</dbReference>
<dbReference type="InterPro" id="IPR018095">
    <property type="entry name" value="Thymidylate_kin_CS"/>
</dbReference>
<dbReference type="InterPro" id="IPR018094">
    <property type="entry name" value="Thymidylate_kinase"/>
</dbReference>
<dbReference type="NCBIfam" id="TIGR00041">
    <property type="entry name" value="DTMP_kinase"/>
    <property type="match status" value="1"/>
</dbReference>
<dbReference type="PANTHER" id="PTHR10344">
    <property type="entry name" value="THYMIDYLATE KINASE"/>
    <property type="match status" value="1"/>
</dbReference>
<dbReference type="PANTHER" id="PTHR10344:SF4">
    <property type="entry name" value="UMP-CMP KINASE 2, MITOCHONDRIAL"/>
    <property type="match status" value="1"/>
</dbReference>
<dbReference type="Pfam" id="PF02223">
    <property type="entry name" value="Thymidylate_kin"/>
    <property type="match status" value="1"/>
</dbReference>
<dbReference type="SUPFAM" id="SSF52540">
    <property type="entry name" value="P-loop containing nucleoside triphosphate hydrolases"/>
    <property type="match status" value="1"/>
</dbReference>
<dbReference type="PROSITE" id="PS01331">
    <property type="entry name" value="THYMIDYLATE_KINASE"/>
    <property type="match status" value="1"/>
</dbReference>
<evidence type="ECO:0000255" key="1">
    <source>
        <dbReference type="HAMAP-Rule" id="MF_00165"/>
    </source>
</evidence>
<sequence>MRSNYIVIEGLEGAGKTTARNVVVETLEQLGIREMIFTREPGGTQLAEKLRSLVLDIKSVGDEVITEKAEVLMFYAARVQLVETVIKPALAKGTWVIGDRHDLSTQAYQGGGRGVDQTMLATLRDAVLGDFRPDLTLYLDVTPEVGLKRARARGELDRIEQESFDFFNRTRARYLELAAQDASIRTIDATQSLECVMADIRQTVTTWVKEQGA</sequence>